<organism>
    <name type="scientific">Arabidopsis thaliana</name>
    <name type="common">Mouse-ear cress</name>
    <dbReference type="NCBI Taxonomy" id="3702"/>
    <lineage>
        <taxon>Eukaryota</taxon>
        <taxon>Viridiplantae</taxon>
        <taxon>Streptophyta</taxon>
        <taxon>Embryophyta</taxon>
        <taxon>Tracheophyta</taxon>
        <taxon>Spermatophyta</taxon>
        <taxon>Magnoliopsida</taxon>
        <taxon>eudicotyledons</taxon>
        <taxon>Gunneridae</taxon>
        <taxon>Pentapetalae</taxon>
        <taxon>rosids</taxon>
        <taxon>malvids</taxon>
        <taxon>Brassicales</taxon>
        <taxon>Brassicaceae</taxon>
        <taxon>Camelineae</taxon>
        <taxon>Arabidopsis</taxon>
    </lineage>
</organism>
<gene>
    <name type="primary">PH1</name>
    <name type="ordered locus">At2g29700</name>
    <name type="ORF">T27A16.20</name>
</gene>
<dbReference type="EMBL" id="AB005903">
    <property type="protein sequence ID" value="BAA84651.1"/>
    <property type="molecule type" value="mRNA"/>
</dbReference>
<dbReference type="EMBL" id="AC005496">
    <property type="protein sequence ID" value="AAC35236.1"/>
    <property type="molecule type" value="Genomic_DNA"/>
</dbReference>
<dbReference type="EMBL" id="CP002685">
    <property type="protein sequence ID" value="AEC08295.1"/>
    <property type="molecule type" value="Genomic_DNA"/>
</dbReference>
<dbReference type="EMBL" id="AY050344">
    <property type="protein sequence ID" value="AAK91361.1"/>
    <property type="molecule type" value="mRNA"/>
</dbReference>
<dbReference type="EMBL" id="AY094043">
    <property type="protein sequence ID" value="AAM16199.1"/>
    <property type="molecule type" value="mRNA"/>
</dbReference>
<dbReference type="EMBL" id="AY084905">
    <property type="protein sequence ID" value="AAM61468.1"/>
    <property type="molecule type" value="mRNA"/>
</dbReference>
<dbReference type="PIR" id="E84699">
    <property type="entry name" value="E84699"/>
</dbReference>
<dbReference type="PIR" id="T52471">
    <property type="entry name" value="T52471"/>
</dbReference>
<dbReference type="RefSeq" id="NP_565687.1">
    <property type="nucleotide sequence ID" value="NM_128524.4"/>
</dbReference>
<dbReference type="SMR" id="Q9ST43"/>
<dbReference type="FunCoup" id="Q9ST43">
    <property type="interactions" value="327"/>
</dbReference>
<dbReference type="STRING" id="3702.Q9ST43"/>
<dbReference type="iPTMnet" id="Q9ST43"/>
<dbReference type="PaxDb" id="3702-AT2G29700.1"/>
<dbReference type="ProteomicsDB" id="236433"/>
<dbReference type="EnsemblPlants" id="AT2G29700.1">
    <property type="protein sequence ID" value="AT2G29700.1"/>
    <property type="gene ID" value="AT2G29700"/>
</dbReference>
<dbReference type="GeneID" id="817520"/>
<dbReference type="Gramene" id="AT2G29700.1">
    <property type="protein sequence ID" value="AT2G29700.1"/>
    <property type="gene ID" value="AT2G29700"/>
</dbReference>
<dbReference type="KEGG" id="ath:AT2G29700"/>
<dbReference type="Araport" id="AT2G29700"/>
<dbReference type="TAIR" id="AT2G29700">
    <property type="gene designation" value="PH1"/>
</dbReference>
<dbReference type="eggNOG" id="ENOG502RXGP">
    <property type="taxonomic scope" value="Eukaryota"/>
</dbReference>
<dbReference type="HOGENOM" id="CLU_111315_0_0_1"/>
<dbReference type="InParanoid" id="Q9ST43"/>
<dbReference type="OMA" id="MESIWRI"/>
<dbReference type="OrthoDB" id="185175at2759"/>
<dbReference type="PhylomeDB" id="Q9ST43"/>
<dbReference type="PRO" id="PR:Q9ST43"/>
<dbReference type="Proteomes" id="UP000006548">
    <property type="component" value="Chromosome 2"/>
</dbReference>
<dbReference type="ExpressionAtlas" id="Q9ST43">
    <property type="expression patterns" value="baseline and differential"/>
</dbReference>
<dbReference type="GO" id="GO:0005777">
    <property type="term" value="C:peroxisome"/>
    <property type="evidence" value="ECO:0007005"/>
    <property type="project" value="TAIR"/>
</dbReference>
<dbReference type="GO" id="GO:0032266">
    <property type="term" value="F:phosphatidylinositol-3-phosphate binding"/>
    <property type="evidence" value="ECO:0000314"/>
    <property type="project" value="GO_Central"/>
</dbReference>
<dbReference type="CDD" id="cd13276">
    <property type="entry name" value="PH_AtPH1"/>
    <property type="match status" value="1"/>
</dbReference>
<dbReference type="FunFam" id="2.30.29.30:FF:000286">
    <property type="entry name" value="PH-protein kinase domain containing protein"/>
    <property type="match status" value="1"/>
</dbReference>
<dbReference type="Gene3D" id="2.30.29.30">
    <property type="entry name" value="Pleckstrin-homology domain (PH domain)/Phosphotyrosine-binding domain (PTB)"/>
    <property type="match status" value="1"/>
</dbReference>
<dbReference type="InterPro" id="IPR011993">
    <property type="entry name" value="PH-like_dom_sf"/>
</dbReference>
<dbReference type="InterPro" id="IPR001849">
    <property type="entry name" value="PH_domain"/>
</dbReference>
<dbReference type="InterPro" id="IPR051707">
    <property type="entry name" value="PI-Interact_SigTrans_Reg"/>
</dbReference>
<dbReference type="PANTHER" id="PTHR14336:SF18">
    <property type="entry name" value="PH DOMAIN-CONTAINING PROTEIN"/>
    <property type="match status" value="1"/>
</dbReference>
<dbReference type="PANTHER" id="PTHR14336">
    <property type="entry name" value="TANDEM PH DOMAIN CONTAINING PROTEIN"/>
    <property type="match status" value="1"/>
</dbReference>
<dbReference type="Pfam" id="PF00169">
    <property type="entry name" value="PH"/>
    <property type="match status" value="1"/>
</dbReference>
<dbReference type="SMART" id="SM00233">
    <property type="entry name" value="PH"/>
    <property type="match status" value="1"/>
</dbReference>
<dbReference type="SUPFAM" id="SSF50729">
    <property type="entry name" value="PH domain-like"/>
    <property type="match status" value="1"/>
</dbReference>
<dbReference type="PROSITE" id="PS50003">
    <property type="entry name" value="PH_DOMAIN"/>
    <property type="match status" value="1"/>
</dbReference>
<sequence length="145" mass="16811">MESIWRIATGQDPSREDYEGIEFWSNPERSGWLTKQGDYIKTWRRRWFVLKRGKLLWFKDQAAAGIRGSTPRGVISVGDCLTVKGAEDVVNKPFAFELSSGSYTMFFIADNEKEKEEWINSIGRSIVQHSRSVTDSEVLDYDHRR</sequence>
<proteinExistence type="evidence at transcript level"/>
<comment type="function">
    <text evidence="2">Binds specifically to phosphatidylinositol 3-phosphate (PtdIns3P), but not to other phosphoinositides.</text>
</comment>
<comment type="subunit">
    <text>Binds PtdIns3P.</text>
</comment>
<comment type="subcellular location">
    <subcellularLocation>
        <location evidence="4">Cytoplasm</location>
    </subcellularLocation>
</comment>
<comment type="tissue specificity">
    <text evidence="3">Ubiquitously expressed.</text>
</comment>
<accession>Q9ST43</accession>
<accession>O82386</accession>
<keyword id="KW-0963">Cytoplasm</keyword>
<keyword id="KW-0446">Lipid-binding</keyword>
<keyword id="KW-1185">Reference proteome</keyword>
<feature type="chain" id="PRO_0000053905" description="Pleckstrin homology domain-containing protein 1">
    <location>
        <begin position="1"/>
        <end position="145"/>
    </location>
</feature>
<feature type="domain" description="PH" evidence="1">
    <location>
        <begin position="26"/>
        <end position="127"/>
    </location>
</feature>
<feature type="region of interest" description="Binds specifically PtdIns3P">
    <location>
        <begin position="29"/>
        <end position="53"/>
    </location>
</feature>
<feature type="sequence conflict" description="In Ref. 1; BAA84651." evidence="4" ref="1">
    <original>I</original>
    <variation>M</variation>
    <location>
        <position position="4"/>
    </location>
</feature>
<protein>
    <recommendedName>
        <fullName>Pleckstrin homology domain-containing protein 1</fullName>
        <shortName>AtPH1</shortName>
    </recommendedName>
</protein>
<name>PH1_ARATH</name>
<reference key="1">
    <citation type="journal article" date="1999" name="J. Exp. Bot.">
        <title>Isolation of an Arabidopsis thaliana cDNA encoding a pleckstrin homology domain protein, a putative homologue of human pleckstrin.</title>
        <authorList>
            <person name="Mikami K."/>
            <person name="Takahashi S."/>
            <person name="Katagiri T."/>
            <person name="Yamaguchi-Shinozaki K."/>
            <person name="Shinozaki K."/>
        </authorList>
    </citation>
    <scope>NUCLEOTIDE SEQUENCE [MRNA]</scope>
    <scope>TISSUE SPECIFICITY</scope>
    <source>
        <strain>cv. Columbia</strain>
    </source>
</reference>
<reference key="2">
    <citation type="journal article" date="1999" name="Nature">
        <title>Sequence and analysis of chromosome 2 of the plant Arabidopsis thaliana.</title>
        <authorList>
            <person name="Lin X."/>
            <person name="Kaul S."/>
            <person name="Rounsley S.D."/>
            <person name="Shea T.P."/>
            <person name="Benito M.-I."/>
            <person name="Town C.D."/>
            <person name="Fujii C.Y."/>
            <person name="Mason T.M."/>
            <person name="Bowman C.L."/>
            <person name="Barnstead M.E."/>
            <person name="Feldblyum T.V."/>
            <person name="Buell C.R."/>
            <person name="Ketchum K.A."/>
            <person name="Lee J.J."/>
            <person name="Ronning C.M."/>
            <person name="Koo H.L."/>
            <person name="Moffat K.S."/>
            <person name="Cronin L.A."/>
            <person name="Shen M."/>
            <person name="Pai G."/>
            <person name="Van Aken S."/>
            <person name="Umayam L."/>
            <person name="Tallon L.J."/>
            <person name="Gill J.E."/>
            <person name="Adams M.D."/>
            <person name="Carrera A.J."/>
            <person name="Creasy T.H."/>
            <person name="Goodman H.M."/>
            <person name="Somerville C.R."/>
            <person name="Copenhaver G.P."/>
            <person name="Preuss D."/>
            <person name="Nierman W.C."/>
            <person name="White O."/>
            <person name="Eisen J.A."/>
            <person name="Salzberg S.L."/>
            <person name="Fraser C.M."/>
            <person name="Venter J.C."/>
        </authorList>
    </citation>
    <scope>NUCLEOTIDE SEQUENCE [LARGE SCALE GENOMIC DNA]</scope>
    <source>
        <strain>cv. Columbia</strain>
    </source>
</reference>
<reference key="3">
    <citation type="journal article" date="2017" name="Plant J.">
        <title>Araport11: a complete reannotation of the Arabidopsis thaliana reference genome.</title>
        <authorList>
            <person name="Cheng C.Y."/>
            <person name="Krishnakumar V."/>
            <person name="Chan A.P."/>
            <person name="Thibaud-Nissen F."/>
            <person name="Schobel S."/>
            <person name="Town C.D."/>
        </authorList>
    </citation>
    <scope>GENOME REANNOTATION</scope>
    <source>
        <strain>cv. Columbia</strain>
    </source>
</reference>
<reference key="4">
    <citation type="journal article" date="2003" name="Science">
        <title>Empirical analysis of transcriptional activity in the Arabidopsis genome.</title>
        <authorList>
            <person name="Yamada K."/>
            <person name="Lim J."/>
            <person name="Dale J.M."/>
            <person name="Chen H."/>
            <person name="Shinn P."/>
            <person name="Palm C.J."/>
            <person name="Southwick A.M."/>
            <person name="Wu H.C."/>
            <person name="Kim C.J."/>
            <person name="Nguyen M."/>
            <person name="Pham P.K."/>
            <person name="Cheuk R.F."/>
            <person name="Karlin-Newmann G."/>
            <person name="Liu S.X."/>
            <person name="Lam B."/>
            <person name="Sakano H."/>
            <person name="Wu T."/>
            <person name="Yu G."/>
            <person name="Miranda M."/>
            <person name="Quach H.L."/>
            <person name="Tripp M."/>
            <person name="Chang C.H."/>
            <person name="Lee J.M."/>
            <person name="Toriumi M.J."/>
            <person name="Chan M.M."/>
            <person name="Tang C.C."/>
            <person name="Onodera C.S."/>
            <person name="Deng J.M."/>
            <person name="Akiyama K."/>
            <person name="Ansari Y."/>
            <person name="Arakawa T."/>
            <person name="Banh J."/>
            <person name="Banno F."/>
            <person name="Bowser L."/>
            <person name="Brooks S.Y."/>
            <person name="Carninci P."/>
            <person name="Chao Q."/>
            <person name="Choy N."/>
            <person name="Enju A."/>
            <person name="Goldsmith A.D."/>
            <person name="Gurjal M."/>
            <person name="Hansen N.F."/>
            <person name="Hayashizaki Y."/>
            <person name="Johnson-Hopson C."/>
            <person name="Hsuan V.W."/>
            <person name="Iida K."/>
            <person name="Karnes M."/>
            <person name="Khan S."/>
            <person name="Koesema E."/>
            <person name="Ishida J."/>
            <person name="Jiang P.X."/>
            <person name="Jones T."/>
            <person name="Kawai J."/>
            <person name="Kamiya A."/>
            <person name="Meyers C."/>
            <person name="Nakajima M."/>
            <person name="Narusaka M."/>
            <person name="Seki M."/>
            <person name="Sakurai T."/>
            <person name="Satou M."/>
            <person name="Tamse R."/>
            <person name="Vaysberg M."/>
            <person name="Wallender E.K."/>
            <person name="Wong C."/>
            <person name="Yamamura Y."/>
            <person name="Yuan S."/>
            <person name="Shinozaki K."/>
            <person name="Davis R.W."/>
            <person name="Theologis A."/>
            <person name="Ecker J.R."/>
        </authorList>
    </citation>
    <scope>NUCLEOTIDE SEQUENCE [LARGE SCALE MRNA]</scope>
    <source>
        <strain>cv. Columbia</strain>
    </source>
</reference>
<reference key="5">
    <citation type="submission" date="2002-03" db="EMBL/GenBank/DDBJ databases">
        <title>Full-length cDNA from Arabidopsis thaliana.</title>
        <authorList>
            <person name="Brover V.V."/>
            <person name="Troukhan M.E."/>
            <person name="Alexandrov N.A."/>
            <person name="Lu Y.-P."/>
            <person name="Flavell R.B."/>
            <person name="Feldmann K.A."/>
        </authorList>
    </citation>
    <scope>NUCLEOTIDE SEQUENCE [LARGE SCALE MRNA]</scope>
</reference>
<reference key="6">
    <citation type="journal article" date="2000" name="Biochem. J.">
        <title>Identification of pleckstrin-homology-domain-containing proteins with novel phosphoinositide-binding specificities.</title>
        <authorList>
            <person name="Dowler S.J."/>
            <person name="Currie R.A."/>
            <person name="Campbell D.G."/>
            <person name="Deak M."/>
            <person name="Kular G."/>
            <person name="Downes C.P."/>
            <person name="Alessi D.R."/>
        </authorList>
    </citation>
    <scope>FUNCTION</scope>
</reference>
<evidence type="ECO:0000255" key="1">
    <source>
        <dbReference type="PROSITE-ProRule" id="PRU00145"/>
    </source>
</evidence>
<evidence type="ECO:0000269" key="2">
    <source>
    </source>
</evidence>
<evidence type="ECO:0000269" key="3">
    <source ref="1"/>
</evidence>
<evidence type="ECO:0000305" key="4"/>